<feature type="chain" id="PRO_0000183417" description="Cytochrome c oxidase subunit 1">
    <location>
        <begin position="1" status="less than"/>
        <end position="219" status="greater than"/>
    </location>
</feature>
<feature type="topological domain" description="Mitochondrial matrix" evidence="2">
    <location>
        <begin position="1" status="less than"/>
        <end position="1"/>
    </location>
</feature>
<feature type="transmembrane region" description="Helical; Name=1" evidence="2">
    <location>
        <begin position="2"/>
        <end position="22"/>
    </location>
</feature>
<feature type="topological domain" description="Mitochondrial intermembrane" evidence="2">
    <location>
        <begin position="23"/>
        <end position="46"/>
    </location>
</feature>
<feature type="transmembrane region" description="Helical; Name=2" evidence="2">
    <location>
        <begin position="47"/>
        <end position="67"/>
    </location>
</feature>
<feature type="topological domain" description="Mitochondrial matrix" evidence="2">
    <location>
        <begin position="68"/>
        <end position="85"/>
    </location>
</feature>
<feature type="transmembrane region" description="Helical; Name=3" evidence="2">
    <location>
        <begin position="86"/>
        <end position="106"/>
    </location>
</feature>
<feature type="topological domain" description="Mitochondrial intermembrane" evidence="2">
    <location>
        <begin position="107"/>
        <end position="128"/>
    </location>
</feature>
<feature type="transmembrane region" description="Helical; Name=4" evidence="2">
    <location>
        <begin position="129"/>
        <end position="149"/>
    </location>
</feature>
<feature type="topological domain" description="Mitochondrial matrix" evidence="2">
    <location>
        <begin position="150"/>
        <end position="166"/>
    </location>
</feature>
<feature type="transmembrane region" description="Helical; Name=5" evidence="2">
    <location>
        <begin position="167"/>
        <end position="187"/>
    </location>
</feature>
<feature type="topological domain" description="Mitochondrial intermembrane" evidence="2">
    <location>
        <begin position="188"/>
        <end position="219"/>
    </location>
</feature>
<feature type="binding site" evidence="1">
    <location>
        <position position="24"/>
    </location>
    <ligand>
        <name>Ca(2+)</name>
        <dbReference type="ChEBI" id="CHEBI:29108"/>
    </ligand>
</feature>
<feature type="binding site" evidence="1">
    <location>
        <position position="29"/>
    </location>
    <ligand>
        <name>Ca(2+)</name>
        <dbReference type="ChEBI" id="CHEBI:29108"/>
    </ligand>
</feature>
<feature type="binding site" description="axial binding residue" evidence="1">
    <location>
        <position position="45"/>
    </location>
    <ligand>
        <name>Fe(II)-heme a</name>
        <dbReference type="ChEBI" id="CHEBI:61715"/>
        <note>low-spin</note>
    </ligand>
    <ligandPart>
        <name>Fe</name>
        <dbReference type="ChEBI" id="CHEBI:18248"/>
    </ligandPart>
</feature>
<feature type="non-terminal residue">
    <location>
        <position position="1"/>
    </location>
</feature>
<feature type="non-terminal residue">
    <location>
        <position position="219"/>
    </location>
</feature>
<name>COX1_ACAPH</name>
<comment type="function">
    <text evidence="1">Component of the cytochrome c oxidase, the last enzyme in the mitochondrial electron transport chain which drives oxidative phosphorylation. The respiratory chain contains 3 multisubunit complexes succinate dehydrogenase (complex II, CII), ubiquinol-cytochrome c oxidoreductase (cytochrome b-c1 complex, complex III, CIII) and cytochrome c oxidase (complex IV, CIV), that cooperate to transfer electrons derived from NADH and succinate to molecular oxygen, creating an electrochemical gradient over the inner membrane that drives transmembrane transport and the ATP synthase. Cytochrome c oxidase is the component of the respiratory chain that catalyzes the reduction of oxygen to water. Electrons originating from reduced cytochrome c in the intermembrane space (IMS) are transferred via the dinuclear copper A center (CU(A)) of subunit 2 and heme A of subunit 1 to the active site in subunit 1, a binuclear center (BNC) formed by heme A3 and copper B (CU(B)). The BNC reduces molecular oxygen to 2 water molecules using 4 electrons from cytochrome c in the IMS and 4 protons from the mitochondrial matrix.</text>
</comment>
<comment type="catalytic activity">
    <reaction evidence="1">
        <text>4 Fe(II)-[cytochrome c] + O2 + 8 H(+)(in) = 4 Fe(III)-[cytochrome c] + 2 H2O + 4 H(+)(out)</text>
        <dbReference type="Rhea" id="RHEA:11436"/>
        <dbReference type="Rhea" id="RHEA-COMP:10350"/>
        <dbReference type="Rhea" id="RHEA-COMP:14399"/>
        <dbReference type="ChEBI" id="CHEBI:15377"/>
        <dbReference type="ChEBI" id="CHEBI:15378"/>
        <dbReference type="ChEBI" id="CHEBI:15379"/>
        <dbReference type="ChEBI" id="CHEBI:29033"/>
        <dbReference type="ChEBI" id="CHEBI:29034"/>
        <dbReference type="EC" id="7.1.1.9"/>
    </reaction>
    <physiologicalReaction direction="left-to-right" evidence="1">
        <dbReference type="Rhea" id="RHEA:11437"/>
    </physiologicalReaction>
</comment>
<comment type="cofactor">
    <cofactor evidence="1">
        <name>heme</name>
        <dbReference type="ChEBI" id="CHEBI:30413"/>
    </cofactor>
    <text evidence="1">Binds 2 heme A groups non-covalently per subunit.</text>
</comment>
<comment type="cofactor">
    <cofactor evidence="1">
        <name>Cu cation</name>
        <dbReference type="ChEBI" id="CHEBI:23378"/>
    </cofactor>
    <text evidence="1">Binds a copper B center.</text>
</comment>
<comment type="pathway">
    <text evidence="1">Energy metabolism; oxidative phosphorylation.</text>
</comment>
<comment type="subunit">
    <text evidence="1">Component of the cytochrome c oxidase (complex IV, CIV), a multisubunit enzyme composed of a catalytic core of 3 subunits and several supernumerary subunits. The complex exists as a monomer or a dimer and forms supercomplexes (SCs) in the inner mitochondrial membrane with ubiquinol-cytochrome c oxidoreductase (cytochrome b-c1 complex, complex III, CIII).</text>
</comment>
<comment type="subcellular location">
    <subcellularLocation>
        <location evidence="1">Mitochondrion inner membrane</location>
        <topology evidence="1">Multi-pass membrane protein</topology>
    </subcellularLocation>
</comment>
<comment type="similarity">
    <text evidence="3">Belongs to the heme-copper respiratory oxidase family.</text>
</comment>
<evidence type="ECO:0000250" key="1">
    <source>
        <dbReference type="UniProtKB" id="P00401"/>
    </source>
</evidence>
<evidence type="ECO:0000255" key="2"/>
<evidence type="ECO:0000305" key="3"/>
<reference key="1">
    <citation type="submission" date="2001-03" db="EMBL/GenBank/DDBJ databases">
        <title>Phylogeny of the cuttlefish (Mollusca: Cephalopoda) based on morphologic and mitochondrial DNA sequence data.</title>
        <authorList>
            <person name="Zheng X.-D."/>
            <person name="Wang R.-C."/>
            <person name="Wang X.-F."/>
            <person name="Xiao S."/>
            <person name="Chen B."/>
        </authorList>
    </citation>
    <scope>NUCLEOTIDE SEQUENCE [GENOMIC DNA]</scope>
</reference>
<gene>
    <name type="primary">COI</name>
</gene>
<dbReference type="EC" id="7.1.1.9"/>
<dbReference type="EMBL" id="AF359555">
    <property type="protein sequence ID" value="AAK52490.1"/>
    <property type="molecule type" value="Genomic_DNA"/>
</dbReference>
<dbReference type="UniPathway" id="UPA00705"/>
<dbReference type="GO" id="GO:0005743">
    <property type="term" value="C:mitochondrial inner membrane"/>
    <property type="evidence" value="ECO:0007669"/>
    <property type="project" value="UniProtKB-SubCell"/>
</dbReference>
<dbReference type="GO" id="GO:0004129">
    <property type="term" value="F:cytochrome-c oxidase activity"/>
    <property type="evidence" value="ECO:0007669"/>
    <property type="project" value="UniProtKB-EC"/>
</dbReference>
<dbReference type="GO" id="GO:0020037">
    <property type="term" value="F:heme binding"/>
    <property type="evidence" value="ECO:0007669"/>
    <property type="project" value="InterPro"/>
</dbReference>
<dbReference type="GO" id="GO:0046872">
    <property type="term" value="F:metal ion binding"/>
    <property type="evidence" value="ECO:0007669"/>
    <property type="project" value="UniProtKB-KW"/>
</dbReference>
<dbReference type="GO" id="GO:0015990">
    <property type="term" value="P:electron transport coupled proton transport"/>
    <property type="evidence" value="ECO:0007669"/>
    <property type="project" value="TreeGrafter"/>
</dbReference>
<dbReference type="GO" id="GO:0006123">
    <property type="term" value="P:mitochondrial electron transport, cytochrome c to oxygen"/>
    <property type="evidence" value="ECO:0007669"/>
    <property type="project" value="TreeGrafter"/>
</dbReference>
<dbReference type="Gene3D" id="1.20.210.10">
    <property type="entry name" value="Cytochrome c oxidase-like, subunit I domain"/>
    <property type="match status" value="1"/>
</dbReference>
<dbReference type="InterPro" id="IPR023616">
    <property type="entry name" value="Cyt_c_oxase-like_su1_dom"/>
</dbReference>
<dbReference type="InterPro" id="IPR036927">
    <property type="entry name" value="Cyt_c_oxase-like_su1_sf"/>
</dbReference>
<dbReference type="InterPro" id="IPR000883">
    <property type="entry name" value="Cyt_C_Oxase_1"/>
</dbReference>
<dbReference type="PANTHER" id="PTHR10422">
    <property type="entry name" value="CYTOCHROME C OXIDASE SUBUNIT 1"/>
    <property type="match status" value="1"/>
</dbReference>
<dbReference type="PANTHER" id="PTHR10422:SF18">
    <property type="entry name" value="CYTOCHROME C OXIDASE SUBUNIT 1"/>
    <property type="match status" value="1"/>
</dbReference>
<dbReference type="Pfam" id="PF00115">
    <property type="entry name" value="COX1"/>
    <property type="match status" value="1"/>
</dbReference>
<dbReference type="PRINTS" id="PR01165">
    <property type="entry name" value="CYCOXIDASEI"/>
</dbReference>
<dbReference type="SUPFAM" id="SSF81442">
    <property type="entry name" value="Cytochrome c oxidase subunit I-like"/>
    <property type="match status" value="1"/>
</dbReference>
<dbReference type="PROSITE" id="PS50855">
    <property type="entry name" value="COX1"/>
    <property type="match status" value="1"/>
</dbReference>
<geneLocation type="mitochondrion"/>
<protein>
    <recommendedName>
        <fullName>Cytochrome c oxidase subunit 1</fullName>
        <ecNumber>7.1.1.9</ecNumber>
    </recommendedName>
    <alternativeName>
        <fullName>Cytochrome c oxidase polypeptide I</fullName>
    </alternativeName>
</protein>
<sequence>TLYFIFGIWSGLLGTSLSLMIRSELGKPGTLLNDDQLYNVVVTAHGFIMIFFLVMPIMIGGFGNWLVPLMLGAPDMAFPRMNNMSFWLLPPSLTLLLSSSAVESGAGTGWTVYPPLSSNLSHAGPSVDLAIFSLHLAGVSSILGAINFITTILNMRWEGLQMERLPLFVWSVFITAILLLLSXPVLAGAITMLLTDRNFNTTFFDPSGGGDPILYQHLF</sequence>
<organism>
    <name type="scientific">Acanthosepion pharaonis</name>
    <name type="common">Pharaoh cuttlefish</name>
    <name type="synonym">Sepia pharaonis</name>
    <dbReference type="NCBI Taxonomy" id="158019"/>
    <lineage>
        <taxon>Eukaryota</taxon>
        <taxon>Metazoa</taxon>
        <taxon>Spiralia</taxon>
        <taxon>Lophotrochozoa</taxon>
        <taxon>Mollusca</taxon>
        <taxon>Cephalopoda</taxon>
        <taxon>Coleoidea</taxon>
        <taxon>Decapodiformes</taxon>
        <taxon>Sepiida</taxon>
        <taxon>Sepiina</taxon>
        <taxon>Sepiidae</taxon>
        <taxon>Acanthosepion</taxon>
    </lineage>
</organism>
<proteinExistence type="inferred from homology"/>
<accession>Q957T2</accession>
<keyword id="KW-0106">Calcium</keyword>
<keyword id="KW-0186">Copper</keyword>
<keyword id="KW-0249">Electron transport</keyword>
<keyword id="KW-0349">Heme</keyword>
<keyword id="KW-0408">Iron</keyword>
<keyword id="KW-0472">Membrane</keyword>
<keyword id="KW-0479">Metal-binding</keyword>
<keyword id="KW-0496">Mitochondrion</keyword>
<keyword id="KW-0999">Mitochondrion inner membrane</keyword>
<keyword id="KW-0679">Respiratory chain</keyword>
<keyword id="KW-1278">Translocase</keyword>
<keyword id="KW-0812">Transmembrane</keyword>
<keyword id="KW-1133">Transmembrane helix</keyword>
<keyword id="KW-0813">Transport</keyword>